<evidence type="ECO:0000250" key="1"/>
<evidence type="ECO:0000255" key="2"/>
<evidence type="ECO:0000305" key="3"/>
<dbReference type="EC" id="3.4.24.39"/>
<dbReference type="EMBL" id="ACYE01000164">
    <property type="protein sequence ID" value="EFE42069.1"/>
    <property type="molecule type" value="Genomic_DNA"/>
</dbReference>
<dbReference type="RefSeq" id="XP_003022687.1">
    <property type="nucleotide sequence ID" value="XM_003022641.1"/>
</dbReference>
<dbReference type="SMR" id="D4D7X4"/>
<dbReference type="GeneID" id="9581346"/>
<dbReference type="KEGG" id="tve:TRV_03208"/>
<dbReference type="HOGENOM" id="CLU_039313_1_0_1"/>
<dbReference type="OrthoDB" id="6653at34384"/>
<dbReference type="Proteomes" id="UP000008383">
    <property type="component" value="Unassembled WGS sequence"/>
</dbReference>
<dbReference type="GO" id="GO:0005576">
    <property type="term" value="C:extracellular region"/>
    <property type="evidence" value="ECO:0007669"/>
    <property type="project" value="UniProtKB-SubCell"/>
</dbReference>
<dbReference type="GO" id="GO:0046872">
    <property type="term" value="F:metal ion binding"/>
    <property type="evidence" value="ECO:0007669"/>
    <property type="project" value="UniProtKB-KW"/>
</dbReference>
<dbReference type="GO" id="GO:0004222">
    <property type="term" value="F:metalloendopeptidase activity"/>
    <property type="evidence" value="ECO:0007669"/>
    <property type="project" value="InterPro"/>
</dbReference>
<dbReference type="GO" id="GO:0006508">
    <property type="term" value="P:proteolysis"/>
    <property type="evidence" value="ECO:0007669"/>
    <property type="project" value="UniProtKB-KW"/>
</dbReference>
<dbReference type="CDD" id="cd11008">
    <property type="entry name" value="M35_deuterolysin_like"/>
    <property type="match status" value="1"/>
</dbReference>
<dbReference type="Gene3D" id="2.60.40.2970">
    <property type="match status" value="1"/>
</dbReference>
<dbReference type="Gene3D" id="3.40.390.10">
    <property type="entry name" value="Collagenase (Catalytic Domain)"/>
    <property type="match status" value="1"/>
</dbReference>
<dbReference type="InterPro" id="IPR050414">
    <property type="entry name" value="Fungal_M35_metalloproteases"/>
</dbReference>
<dbReference type="InterPro" id="IPR024079">
    <property type="entry name" value="MetalloPept_cat_dom_sf"/>
</dbReference>
<dbReference type="InterPro" id="IPR001384">
    <property type="entry name" value="Peptidase_M35"/>
</dbReference>
<dbReference type="PANTHER" id="PTHR37016">
    <property type="match status" value="1"/>
</dbReference>
<dbReference type="PANTHER" id="PTHR37016:SF3">
    <property type="entry name" value="NEUTRAL PROTEASE 2-RELATED"/>
    <property type="match status" value="1"/>
</dbReference>
<dbReference type="Pfam" id="PF02102">
    <property type="entry name" value="Peptidase_M35"/>
    <property type="match status" value="1"/>
</dbReference>
<dbReference type="PRINTS" id="PR00768">
    <property type="entry name" value="DEUTEROLYSIN"/>
</dbReference>
<dbReference type="SUPFAM" id="SSF55486">
    <property type="entry name" value="Metalloproteases ('zincins'), catalytic domain"/>
    <property type="match status" value="1"/>
</dbReference>
<name>NPIIF_TRIVH</name>
<sequence>MKFFTALAAVGALLAPALALPTPASEEASHNQTLSVRLVPAGHTMVRAIVTNNGERPLHLLSFNTILDEDPTSKVEVFHESGDEAEFLGMLPRYDLSDLTEDLFTRLAPKDSVEHLFDIATVHDLKWDGKYTLAARGAIPVAEDGGTTIIDHVYYESNELDMEIDARKAAMVPRAFDDYFSKSLDKRRPLDICNPRKERDLRAALEGAQQVAKEAAAAAQNNTEKVFEFFRARDPGTRKEVSQHLSSISRAATKDGSSVTWFCSDGPGRCGPRTIAYTFPAKNEVHPCPLFWQMPHVNNKCHRQDRVGTVIHEGAHNPSVVTPYCKDLGYGYNRATGLTSQRAKRNADNYALFAMARQLVFCLLHLFVALPFIYIFASF</sequence>
<proteinExistence type="inferred from homology"/>
<keyword id="KW-0165">Cleavage on pair of basic residues</keyword>
<keyword id="KW-1015">Disulfide bond</keyword>
<keyword id="KW-0325">Glycoprotein</keyword>
<keyword id="KW-0378">Hydrolase</keyword>
<keyword id="KW-0479">Metal-binding</keyword>
<keyword id="KW-0482">Metalloprotease</keyword>
<keyword id="KW-0645">Protease</keyword>
<keyword id="KW-0964">Secreted</keyword>
<keyword id="KW-0732">Signal</keyword>
<keyword id="KW-0843">Virulence</keyword>
<keyword id="KW-0862">Zinc</keyword>
<keyword id="KW-0865">Zymogen</keyword>
<feature type="signal peptide" evidence="2">
    <location>
        <begin position="1"/>
        <end position="19"/>
    </location>
</feature>
<feature type="propeptide" id="PRO_0000407146" evidence="1">
    <location>
        <begin position="20"/>
        <end position="187"/>
    </location>
</feature>
<feature type="chain" id="PRO_0000407147" description="Neutral protease 2 homolog TRV_03208">
    <location>
        <begin position="188"/>
        <end position="379"/>
    </location>
</feature>
<feature type="active site" evidence="1">
    <location>
        <position position="313"/>
    </location>
</feature>
<feature type="binding site" evidence="1">
    <location>
        <position position="312"/>
    </location>
    <ligand>
        <name>Zn(2+)</name>
        <dbReference type="ChEBI" id="CHEBI:29105"/>
        <note>catalytic</note>
    </ligand>
</feature>
<feature type="binding site" evidence="1">
    <location>
        <position position="316"/>
    </location>
    <ligand>
        <name>Zn(2+)</name>
        <dbReference type="ChEBI" id="CHEBI:29105"/>
        <note>catalytic</note>
    </ligand>
</feature>
<feature type="binding site" evidence="1">
    <location>
        <position position="327"/>
    </location>
    <ligand>
        <name>Zn(2+)</name>
        <dbReference type="ChEBI" id="CHEBI:29105"/>
        <note>catalytic</note>
    </ligand>
</feature>
<feature type="glycosylation site" description="N-linked (GlcNAc...) asparagine" evidence="2">
    <location>
        <position position="221"/>
    </location>
</feature>
<feature type="disulfide bond" evidence="1">
    <location>
        <begin position="193"/>
        <end position="263"/>
    </location>
</feature>
<feature type="disulfide bond" evidence="1">
    <location>
        <begin position="270"/>
        <end position="288"/>
    </location>
</feature>
<protein>
    <recommendedName>
        <fullName>Neutral protease 2 homolog TRV_03208</fullName>
        <ecNumber>3.4.24.39</ecNumber>
    </recommendedName>
    <alternativeName>
        <fullName>Deuterolysin TRV_03208</fullName>
    </alternativeName>
</protein>
<gene>
    <name type="ORF">TRV_03208</name>
</gene>
<organism>
    <name type="scientific">Trichophyton verrucosum (strain HKI 0517)</name>
    <dbReference type="NCBI Taxonomy" id="663202"/>
    <lineage>
        <taxon>Eukaryota</taxon>
        <taxon>Fungi</taxon>
        <taxon>Dikarya</taxon>
        <taxon>Ascomycota</taxon>
        <taxon>Pezizomycotina</taxon>
        <taxon>Eurotiomycetes</taxon>
        <taxon>Eurotiomycetidae</taxon>
        <taxon>Onygenales</taxon>
        <taxon>Arthrodermataceae</taxon>
        <taxon>Trichophyton</taxon>
    </lineage>
</organism>
<comment type="function">
    <text evidence="1">Secreted metalloproteinase that allows assimilation of proteinaceous substrates. Shows high activities on basic nuclear substrates such as histone and protamine. May be involved in virulence (By similarity).</text>
</comment>
<comment type="catalytic activity">
    <reaction>
        <text>Preferential cleavage of bonds with hydrophobic residues in P1'. Also 3-Asn-|-Gln-4 and 8-Gly-|-Ser-9 bonds in insulin B chain.</text>
        <dbReference type="EC" id="3.4.24.39"/>
    </reaction>
</comment>
<comment type="cofactor">
    <cofactor evidence="1">
        <name>Zn(2+)</name>
        <dbReference type="ChEBI" id="CHEBI:29105"/>
    </cofactor>
    <text evidence="1">Binds 1 zinc ion per subunit.</text>
</comment>
<comment type="subcellular location">
    <subcellularLocation>
        <location evidence="1">Secreted</location>
    </subcellularLocation>
</comment>
<comment type="similarity">
    <text evidence="3">Belongs to the peptidase M35 family.</text>
</comment>
<accession>D4D7X4</accession>
<reference key="1">
    <citation type="journal article" date="2011" name="Genome Biol.">
        <title>Comparative and functional genomics provide insights into the pathogenicity of dermatophytic fungi.</title>
        <authorList>
            <person name="Burmester A."/>
            <person name="Shelest E."/>
            <person name="Gloeckner G."/>
            <person name="Heddergott C."/>
            <person name="Schindler S."/>
            <person name="Staib P."/>
            <person name="Heidel A."/>
            <person name="Felder M."/>
            <person name="Petzold A."/>
            <person name="Szafranski K."/>
            <person name="Feuermann M."/>
            <person name="Pedruzzi I."/>
            <person name="Priebe S."/>
            <person name="Groth M."/>
            <person name="Winkler R."/>
            <person name="Li W."/>
            <person name="Kniemeyer O."/>
            <person name="Schroeckh V."/>
            <person name="Hertweck C."/>
            <person name="Hube B."/>
            <person name="White T.C."/>
            <person name="Platzer M."/>
            <person name="Guthke R."/>
            <person name="Heitman J."/>
            <person name="Woestemeyer J."/>
            <person name="Zipfel P.F."/>
            <person name="Monod M."/>
            <person name="Brakhage A.A."/>
        </authorList>
    </citation>
    <scope>NUCLEOTIDE SEQUENCE [LARGE SCALE GENOMIC DNA]</scope>
    <source>
        <strain>HKI 0517</strain>
    </source>
</reference>